<evidence type="ECO:0000255" key="1">
    <source>
        <dbReference type="HAMAP-Rule" id="MF_00749"/>
    </source>
</evidence>
<evidence type="ECO:0000256" key="2">
    <source>
        <dbReference type="SAM" id="MobiDB-lite"/>
    </source>
</evidence>
<comment type="function">
    <text evidence="1">RNA chaperone with significant RNA binding, RNA strand exchange and RNA duplexing activities. May regulate ProP activity through an RNA-based, post-transcriptional mechanism.</text>
</comment>
<comment type="subcellular location">
    <subcellularLocation>
        <location evidence="1">Cytoplasm</location>
    </subcellularLocation>
</comment>
<comment type="similarity">
    <text evidence="1">Belongs to the ProQ family.</text>
</comment>
<name>PROQ_ESCF3</name>
<keyword id="KW-0143">Chaperone</keyword>
<keyword id="KW-0963">Cytoplasm</keyword>
<keyword id="KW-0694">RNA-binding</keyword>
<gene>
    <name evidence="1" type="primary">proQ</name>
    <name type="ordered locus">EFER_1243</name>
</gene>
<dbReference type="EMBL" id="CU928158">
    <property type="protein sequence ID" value="CAQ88767.1"/>
    <property type="molecule type" value="Genomic_DNA"/>
</dbReference>
<dbReference type="RefSeq" id="WP_000431358.1">
    <property type="nucleotide sequence ID" value="NC_011740.1"/>
</dbReference>
<dbReference type="SMR" id="B7LPL4"/>
<dbReference type="GeneID" id="75057710"/>
<dbReference type="KEGG" id="efe:EFER_1243"/>
<dbReference type="HOGENOM" id="CLU_113254_0_0_6"/>
<dbReference type="OrthoDB" id="8421419at2"/>
<dbReference type="Proteomes" id="UP000000745">
    <property type="component" value="Chromosome"/>
</dbReference>
<dbReference type="GO" id="GO:0005829">
    <property type="term" value="C:cytosol"/>
    <property type="evidence" value="ECO:0007669"/>
    <property type="project" value="TreeGrafter"/>
</dbReference>
<dbReference type="GO" id="GO:0033592">
    <property type="term" value="F:RNA strand annealing activity"/>
    <property type="evidence" value="ECO:0007669"/>
    <property type="project" value="UniProtKB-UniRule"/>
</dbReference>
<dbReference type="GO" id="GO:0034057">
    <property type="term" value="F:RNA strand-exchange activity"/>
    <property type="evidence" value="ECO:0007669"/>
    <property type="project" value="UniProtKB-UniRule"/>
</dbReference>
<dbReference type="GO" id="GO:0010608">
    <property type="term" value="P:post-transcriptional regulation of gene expression"/>
    <property type="evidence" value="ECO:0007669"/>
    <property type="project" value="InterPro"/>
</dbReference>
<dbReference type="FunFam" id="1.10.1710.10:FF:000001">
    <property type="entry name" value="RNA chaperone ProQ"/>
    <property type="match status" value="1"/>
</dbReference>
<dbReference type="Gene3D" id="1.10.1710.10">
    <property type="entry name" value="ProQ/FinO domain"/>
    <property type="match status" value="1"/>
</dbReference>
<dbReference type="HAMAP" id="MF_00749">
    <property type="entry name" value="ProQ"/>
    <property type="match status" value="1"/>
</dbReference>
<dbReference type="InterPro" id="IPR023529">
    <property type="entry name" value="ProQ"/>
</dbReference>
<dbReference type="InterPro" id="IPR016103">
    <property type="entry name" value="ProQ/FinO"/>
</dbReference>
<dbReference type="InterPro" id="IPR036442">
    <property type="entry name" value="ProQ/FinO_sf"/>
</dbReference>
<dbReference type="InterPro" id="IPR035236">
    <property type="entry name" value="ProQ_C"/>
</dbReference>
<dbReference type="NCBIfam" id="NF003434">
    <property type="entry name" value="PRK04950.1"/>
    <property type="match status" value="1"/>
</dbReference>
<dbReference type="PANTHER" id="PTHR38106">
    <property type="entry name" value="RNA CHAPERONE PROQ"/>
    <property type="match status" value="1"/>
</dbReference>
<dbReference type="PANTHER" id="PTHR38106:SF1">
    <property type="entry name" value="RNA CHAPERONE PROQ"/>
    <property type="match status" value="1"/>
</dbReference>
<dbReference type="Pfam" id="PF04352">
    <property type="entry name" value="ProQ"/>
    <property type="match status" value="1"/>
</dbReference>
<dbReference type="Pfam" id="PF17516">
    <property type="entry name" value="ProQ_C"/>
    <property type="match status" value="1"/>
</dbReference>
<dbReference type="SMART" id="SM00945">
    <property type="entry name" value="ProQ"/>
    <property type="match status" value="1"/>
</dbReference>
<dbReference type="SUPFAM" id="SSF48657">
    <property type="entry name" value="FinO-like"/>
    <property type="match status" value="1"/>
</dbReference>
<proteinExistence type="inferred from homology"/>
<protein>
    <recommendedName>
        <fullName evidence="1">RNA chaperone ProQ</fullName>
    </recommendedName>
</protein>
<organism>
    <name type="scientific">Escherichia fergusonii (strain ATCC 35469 / DSM 13698 / CCUG 18766 / IAM 14443 / JCM 21226 / LMG 7866 / NBRC 102419 / NCTC 12128 / CDC 0568-73)</name>
    <dbReference type="NCBI Taxonomy" id="585054"/>
    <lineage>
        <taxon>Bacteria</taxon>
        <taxon>Pseudomonadati</taxon>
        <taxon>Pseudomonadota</taxon>
        <taxon>Gammaproteobacteria</taxon>
        <taxon>Enterobacterales</taxon>
        <taxon>Enterobacteriaceae</taxon>
        <taxon>Escherichia</taxon>
    </lineage>
</organism>
<feature type="chain" id="PRO_1000133298" description="RNA chaperone ProQ">
    <location>
        <begin position="1"/>
        <end position="229"/>
    </location>
</feature>
<feature type="region of interest" description="Disordered" evidence="2">
    <location>
        <begin position="105"/>
        <end position="178"/>
    </location>
</feature>
<feature type="compositionally biased region" description="Basic and acidic residues" evidence="2">
    <location>
        <begin position="117"/>
        <end position="136"/>
    </location>
</feature>
<feature type="compositionally biased region" description="Basic residues" evidence="2">
    <location>
        <begin position="137"/>
        <end position="146"/>
    </location>
</feature>
<feature type="compositionally biased region" description="Basic and acidic residues" evidence="2">
    <location>
        <begin position="147"/>
        <end position="176"/>
    </location>
</feature>
<sequence>MENQPKLNSSKEVIAFLAERFPHCFSAEGEARPLKIGIFQDLVDRVAGEMNLSKTQLRSALRLYTSSWRYLYGVKPGAIRVDLDGNPCGELEEQHVEHARKQLEEAKARVQAQRAEQQAKKREAAAAAGDKESAPRRERKPRPAAPRRKEGAERKPRAEKPAAKAPRAPREEKHTPVSDISALTVGQALKVKAGNDAMDATVLEITKDGVRVQLNSGMSLIVRAEHLVF</sequence>
<reference key="1">
    <citation type="journal article" date="2009" name="PLoS Genet.">
        <title>Organised genome dynamics in the Escherichia coli species results in highly diverse adaptive paths.</title>
        <authorList>
            <person name="Touchon M."/>
            <person name="Hoede C."/>
            <person name="Tenaillon O."/>
            <person name="Barbe V."/>
            <person name="Baeriswyl S."/>
            <person name="Bidet P."/>
            <person name="Bingen E."/>
            <person name="Bonacorsi S."/>
            <person name="Bouchier C."/>
            <person name="Bouvet O."/>
            <person name="Calteau A."/>
            <person name="Chiapello H."/>
            <person name="Clermont O."/>
            <person name="Cruveiller S."/>
            <person name="Danchin A."/>
            <person name="Diard M."/>
            <person name="Dossat C."/>
            <person name="Karoui M.E."/>
            <person name="Frapy E."/>
            <person name="Garry L."/>
            <person name="Ghigo J.M."/>
            <person name="Gilles A.M."/>
            <person name="Johnson J."/>
            <person name="Le Bouguenec C."/>
            <person name="Lescat M."/>
            <person name="Mangenot S."/>
            <person name="Martinez-Jehanne V."/>
            <person name="Matic I."/>
            <person name="Nassif X."/>
            <person name="Oztas S."/>
            <person name="Petit M.A."/>
            <person name="Pichon C."/>
            <person name="Rouy Z."/>
            <person name="Ruf C.S."/>
            <person name="Schneider D."/>
            <person name="Tourret J."/>
            <person name="Vacherie B."/>
            <person name="Vallenet D."/>
            <person name="Medigue C."/>
            <person name="Rocha E.P.C."/>
            <person name="Denamur E."/>
        </authorList>
    </citation>
    <scope>NUCLEOTIDE SEQUENCE [LARGE SCALE GENOMIC DNA]</scope>
    <source>
        <strain>ATCC 35469 / DSM 13698 / BCRC 15582 / CCUG 18766 / IAM 14443 / JCM 21226 / LMG 7866 / NBRC 102419 / NCTC 12128 / CDC 0568-73</strain>
    </source>
</reference>
<accession>B7LPL4</accession>